<sequence length="365" mass="41676">MSDEIVTNKSVTYVNNTTPVTITSSELDLRSCYQDDEVVIEVHAAALNPIDFITHQLCNSYIFGKYPKTYSRDYSGVIIKAGKDVDNRWKVGDKVNGMYSHIYGERGTLTHYLILNPAKDIPITHMVEVPKDENDPYDDFVYAAAWPLTFGTAFSTLYDFKKDWTSDSKVLVIGASTSVSYAFVHIAKNYFNIGTVVGICSKNSIERNKKLGYDYLVPYDEGSIVENVKKLKQIVLENDKFDMIFDSVGNHDFFPVIDQFLKPKAKNSFYVTIAGNNKANYKNISWRDFVSLSSILKAINPFKKYNWRFGHPYPPNNFIEVGNEMIKKGTYKPPIDSVYEFDQYKEAIDRLMSNRAKGKVVVKMK</sequence>
<keyword id="KW-0551">Lipid droplet</keyword>
<keyword id="KW-0496">Mitochondrion</keyword>
<reference key="1">
    <citation type="journal article" date="2009" name="Proc. Natl. Acad. Sci. U.S.A.">
        <title>Eukaryote-to-eukaryote gene transfer events revealed by the genome sequence of the wine yeast Saccharomyces cerevisiae EC1118.</title>
        <authorList>
            <person name="Novo M."/>
            <person name="Bigey F."/>
            <person name="Beyne E."/>
            <person name="Galeote V."/>
            <person name="Gavory F."/>
            <person name="Mallet S."/>
            <person name="Cambon B."/>
            <person name="Legras J.-L."/>
            <person name="Wincker P."/>
            <person name="Casaregola S."/>
            <person name="Dequin S."/>
        </authorList>
    </citation>
    <scope>NUCLEOTIDE SEQUENCE [LARGE SCALE GENOMIC DNA]</scope>
    <source>
        <strain>Lalvin EC1118 / Prise de mousse</strain>
    </source>
</reference>
<evidence type="ECO:0000250" key="1"/>
<evidence type="ECO:0000305" key="2"/>
<protein>
    <recommendedName>
        <fullName>Protein YIM1</fullName>
    </recommendedName>
</protein>
<organism>
    <name type="scientific">Saccharomyces cerevisiae (strain Lalvin EC1118 / Prise de mousse)</name>
    <name type="common">Baker's yeast</name>
    <dbReference type="NCBI Taxonomy" id="643680"/>
    <lineage>
        <taxon>Eukaryota</taxon>
        <taxon>Fungi</taxon>
        <taxon>Dikarya</taxon>
        <taxon>Ascomycota</taxon>
        <taxon>Saccharomycotina</taxon>
        <taxon>Saccharomycetes</taxon>
        <taxon>Saccharomycetales</taxon>
        <taxon>Saccharomycetaceae</taxon>
        <taxon>Saccharomyces</taxon>
    </lineage>
</organism>
<accession>C8ZF09</accession>
<comment type="subcellular location">
    <subcellularLocation>
        <location evidence="1">Lipid droplet</location>
    </subcellularLocation>
    <subcellularLocation>
        <location evidence="1">Mitochondrion</location>
    </subcellularLocation>
</comment>
<comment type="similarity">
    <text evidence="2">Belongs to the YIM1 family.</text>
</comment>
<feature type="chain" id="PRO_0000409684" description="Protein YIM1">
    <location>
        <begin position="1"/>
        <end position="365"/>
    </location>
</feature>
<name>YIM1_YEAS8</name>
<gene>
    <name type="primary">YIM1</name>
    <name type="ORF">EC1118_1M3_3334g</name>
</gene>
<proteinExistence type="inferred from homology"/>
<dbReference type="EMBL" id="FN393082">
    <property type="protein sequence ID" value="CAY81975.1"/>
    <property type="molecule type" value="Genomic_DNA"/>
</dbReference>
<dbReference type="SMR" id="C8ZF09"/>
<dbReference type="HOGENOM" id="CLU_026673_3_3_1"/>
<dbReference type="OrthoDB" id="39914at4893"/>
<dbReference type="Proteomes" id="UP000000286">
    <property type="component" value="Chromosome XIII, Scaffold EC1118_1M3"/>
</dbReference>
<dbReference type="GO" id="GO:0005811">
    <property type="term" value="C:lipid droplet"/>
    <property type="evidence" value="ECO:0007669"/>
    <property type="project" value="UniProtKB-SubCell"/>
</dbReference>
<dbReference type="GO" id="GO:0005739">
    <property type="term" value="C:mitochondrion"/>
    <property type="evidence" value="ECO:0007669"/>
    <property type="project" value="UniProtKB-SubCell"/>
</dbReference>
<dbReference type="CDD" id="cd08247">
    <property type="entry name" value="AST1_like"/>
    <property type="match status" value="1"/>
</dbReference>
<dbReference type="Gene3D" id="3.90.180.10">
    <property type="entry name" value="Medium-chain alcohol dehydrogenases, catalytic domain"/>
    <property type="match status" value="1"/>
</dbReference>
<dbReference type="Gene3D" id="3.40.50.720">
    <property type="entry name" value="NAD(P)-binding Rossmann-like Domain"/>
    <property type="match status" value="1"/>
</dbReference>
<dbReference type="InterPro" id="IPR013154">
    <property type="entry name" value="ADH-like_N"/>
</dbReference>
<dbReference type="InterPro" id="IPR011032">
    <property type="entry name" value="GroES-like_sf"/>
</dbReference>
<dbReference type="InterPro" id="IPR036291">
    <property type="entry name" value="NAD(P)-bd_dom_sf"/>
</dbReference>
<dbReference type="InterPro" id="IPR050700">
    <property type="entry name" value="YIM1/Zinc_Alcohol_DH_Fams"/>
</dbReference>
<dbReference type="PANTHER" id="PTHR11695">
    <property type="entry name" value="ALCOHOL DEHYDROGENASE RELATED"/>
    <property type="match status" value="1"/>
</dbReference>
<dbReference type="PANTHER" id="PTHR11695:SF294">
    <property type="entry name" value="RETICULON-4-INTERACTING PROTEIN 1, MITOCHONDRIAL"/>
    <property type="match status" value="1"/>
</dbReference>
<dbReference type="Pfam" id="PF08240">
    <property type="entry name" value="ADH_N"/>
    <property type="match status" value="1"/>
</dbReference>
<dbReference type="Pfam" id="PF13602">
    <property type="entry name" value="ADH_zinc_N_2"/>
    <property type="match status" value="1"/>
</dbReference>
<dbReference type="SUPFAM" id="SSF50129">
    <property type="entry name" value="GroES-like"/>
    <property type="match status" value="1"/>
</dbReference>
<dbReference type="SUPFAM" id="SSF51735">
    <property type="entry name" value="NAD(P)-binding Rossmann-fold domains"/>
    <property type="match status" value="1"/>
</dbReference>